<proteinExistence type="evidence at protein level"/>
<evidence type="ECO:0000250" key="1"/>
<evidence type="ECO:0000256" key="2">
    <source>
        <dbReference type="SAM" id="MobiDB-lite"/>
    </source>
</evidence>
<evidence type="ECO:0000269" key="3">
    <source>
    </source>
</evidence>
<evidence type="ECO:0000269" key="4">
    <source>
    </source>
</evidence>
<evidence type="ECO:0000269" key="5">
    <source>
    </source>
</evidence>
<evidence type="ECO:0000269" key="6">
    <source>
    </source>
</evidence>
<evidence type="ECO:0000269" key="7">
    <source>
    </source>
</evidence>
<evidence type="ECO:0000269" key="8">
    <source>
    </source>
</evidence>
<evidence type="ECO:0000269" key="9">
    <source>
    </source>
</evidence>
<evidence type="ECO:0000269" key="10">
    <source>
    </source>
</evidence>
<evidence type="ECO:0000269" key="11">
    <source>
    </source>
</evidence>
<evidence type="ECO:0000269" key="12">
    <source>
    </source>
</evidence>
<evidence type="ECO:0000269" key="13">
    <source>
    </source>
</evidence>
<evidence type="ECO:0000303" key="14">
    <source>
    </source>
</evidence>
<evidence type="ECO:0000305" key="15"/>
<evidence type="ECO:0007744" key="16">
    <source>
    </source>
</evidence>
<evidence type="ECO:0007744" key="17">
    <source>
    </source>
</evidence>
<evidence type="ECO:0007829" key="18">
    <source>
        <dbReference type="PDB" id="7EMF"/>
    </source>
</evidence>
<keyword id="KW-0002">3D-structure</keyword>
<keyword id="KW-0010">Activator</keyword>
<keyword id="KW-0025">Alternative splicing</keyword>
<keyword id="KW-0903">Direct protein sequencing</keyword>
<keyword id="KW-0225">Disease variant</keyword>
<keyword id="KW-0539">Nucleus</keyword>
<keyword id="KW-1267">Proteomics identification</keyword>
<keyword id="KW-1185">Reference proteome</keyword>
<keyword id="KW-0804">Transcription</keyword>
<keyword id="KW-0805">Transcription regulation</keyword>
<feature type="chain" id="PRO_0000079359" description="Mediator of RNA polymerase II transcription subunit 17">
    <location>
        <begin position="1"/>
        <end position="651"/>
    </location>
</feature>
<feature type="region of interest" description="Disordered" evidence="2">
    <location>
        <begin position="51"/>
        <end position="83"/>
    </location>
</feature>
<feature type="splice variant" id="VSP_028115" description="In isoform 2." evidence="14">
    <original>NPQTLQ</original>
    <variation>VFVDFN</variation>
    <location>
        <begin position="140"/>
        <end position="145"/>
    </location>
</feature>
<feature type="splice variant" id="VSP_028116" description="In isoform 2." evidence="14">
    <location>
        <begin position="146"/>
        <end position="651"/>
    </location>
</feature>
<feature type="sequence variant" id="VAR_063126" description="In dbSNP:rs2848477." evidence="3 4 8 10 16 17">
    <original>E</original>
    <variation>D</variation>
    <location>
        <position position="69"/>
    </location>
</feature>
<feature type="sequence variant" id="VAR_057781" description="In dbSNP:rs35313315.">
    <original>F</original>
    <variation>L</variation>
    <location>
        <position position="357"/>
    </location>
</feature>
<feature type="sequence variant" id="VAR_065066" description="In MCPHSBA; dbSNP:rs267607232." evidence="13">
    <original>L</original>
    <variation>P</variation>
    <location>
        <position position="371"/>
    </location>
</feature>
<feature type="sequence conflict" description="In Ref. 3; BAB13973." evidence="15" ref="3">
    <original>E</original>
    <variation>G</variation>
    <location>
        <position position="21"/>
    </location>
</feature>
<feature type="sequence conflict" description="In Ref. 3; BAB13973." evidence="15" ref="3">
    <original>E</original>
    <variation>G</variation>
    <location>
        <position position="58"/>
    </location>
</feature>
<feature type="sequence conflict" description="In Ref. 2; AAD30856." evidence="15" ref="2">
    <original>K</original>
    <variation>N</variation>
    <location>
        <position position="356"/>
    </location>
</feature>
<feature type="sequence conflict" description="In Ref. 1; AA sequence." evidence="15" ref="1">
    <original>G</original>
    <variation>Q</variation>
    <location>
        <position position="409"/>
    </location>
</feature>
<feature type="sequence conflict" description="In Ref. 6; AAD12723." evidence="15" ref="6">
    <original>Q</original>
    <variation>H</variation>
    <location>
        <position position="531"/>
    </location>
</feature>
<feature type="helix" evidence="18">
    <location>
        <begin position="37"/>
        <end position="46"/>
    </location>
</feature>
<feature type="helix" evidence="18">
    <location>
        <begin position="97"/>
        <end position="120"/>
    </location>
</feature>
<feature type="strand" evidence="18">
    <location>
        <begin position="126"/>
        <end position="129"/>
    </location>
</feature>
<feature type="helix" evidence="18">
    <location>
        <begin position="140"/>
        <end position="171"/>
    </location>
</feature>
<feature type="helix" evidence="18">
    <location>
        <begin position="183"/>
        <end position="193"/>
    </location>
</feature>
<feature type="strand" evidence="18">
    <location>
        <begin position="194"/>
        <end position="199"/>
    </location>
</feature>
<feature type="strand" evidence="18">
    <location>
        <begin position="202"/>
        <end position="206"/>
    </location>
</feature>
<feature type="turn" evidence="18">
    <location>
        <begin position="209"/>
        <end position="213"/>
    </location>
</feature>
<feature type="strand" evidence="18">
    <location>
        <begin position="221"/>
        <end position="226"/>
    </location>
</feature>
<feature type="strand" evidence="18">
    <location>
        <begin position="243"/>
        <end position="246"/>
    </location>
</feature>
<feature type="strand" evidence="18">
    <location>
        <begin position="255"/>
        <end position="263"/>
    </location>
</feature>
<feature type="helix" evidence="18">
    <location>
        <begin position="290"/>
        <end position="317"/>
    </location>
</feature>
<feature type="strand" evidence="18">
    <location>
        <begin position="328"/>
        <end position="333"/>
    </location>
</feature>
<feature type="strand" evidence="18">
    <location>
        <begin position="340"/>
        <end position="347"/>
    </location>
</feature>
<feature type="helix" evidence="18">
    <location>
        <begin position="369"/>
        <end position="386"/>
    </location>
</feature>
<feature type="helix" evidence="18">
    <location>
        <begin position="389"/>
        <end position="391"/>
    </location>
</feature>
<feature type="strand" evidence="18">
    <location>
        <begin position="394"/>
        <end position="398"/>
    </location>
</feature>
<feature type="helix" evidence="18">
    <location>
        <begin position="403"/>
        <end position="407"/>
    </location>
</feature>
<feature type="turn" evidence="18">
    <location>
        <begin position="408"/>
        <end position="412"/>
    </location>
</feature>
<feature type="helix" evidence="18">
    <location>
        <begin position="415"/>
        <end position="421"/>
    </location>
</feature>
<feature type="helix" evidence="18">
    <location>
        <begin position="427"/>
        <end position="454"/>
    </location>
</feature>
<feature type="turn" evidence="18">
    <location>
        <begin position="485"/>
        <end position="487"/>
    </location>
</feature>
<feature type="strand" evidence="18">
    <location>
        <begin position="492"/>
        <end position="497"/>
    </location>
</feature>
<feature type="strand" evidence="18">
    <location>
        <begin position="502"/>
        <end position="506"/>
    </location>
</feature>
<feature type="strand" evidence="18">
    <location>
        <begin position="511"/>
        <end position="514"/>
    </location>
</feature>
<feature type="helix" evidence="18">
    <location>
        <begin position="520"/>
        <end position="543"/>
    </location>
</feature>
<feature type="strand" evidence="18">
    <location>
        <begin position="547"/>
        <end position="555"/>
    </location>
</feature>
<feature type="strand" evidence="18">
    <location>
        <begin position="557"/>
        <end position="559"/>
    </location>
</feature>
<feature type="strand" evidence="18">
    <location>
        <begin position="562"/>
        <end position="564"/>
    </location>
</feature>
<feature type="strand" evidence="18">
    <location>
        <begin position="566"/>
        <end position="573"/>
    </location>
</feature>
<feature type="strand" evidence="18">
    <location>
        <begin position="576"/>
        <end position="584"/>
    </location>
</feature>
<feature type="strand" evidence="18">
    <location>
        <begin position="586"/>
        <end position="588"/>
    </location>
</feature>
<feature type="strand" evidence="18">
    <location>
        <begin position="591"/>
        <end position="595"/>
    </location>
</feature>
<feature type="strand" evidence="18">
    <location>
        <begin position="602"/>
        <end position="604"/>
    </location>
</feature>
<feature type="helix" evidence="18">
    <location>
        <begin position="614"/>
        <end position="616"/>
    </location>
</feature>
<feature type="strand" evidence="18">
    <location>
        <begin position="622"/>
        <end position="625"/>
    </location>
</feature>
<feature type="strand" evidence="18">
    <location>
        <begin position="633"/>
        <end position="635"/>
    </location>
</feature>
<feature type="helix" evidence="18">
    <location>
        <begin position="636"/>
        <end position="645"/>
    </location>
</feature>
<gene>
    <name type="primary">MED17</name>
    <name type="synonym">ARC77</name>
    <name type="synonym">CRSP6</name>
    <name type="synonym">DRIP77</name>
    <name type="synonym">DRIP80</name>
    <name type="synonym">TRAP80</name>
</gene>
<sequence>MSGVRAVRISIESACEKQVHEVGLDGTETYLPPLSMSQNLARLAQRIDFSQGSGSEEEEAAGTEGDAQEWPGAGSSADQDDEEGVVKFQPSLWPWDSVRNNLRSALTEMCVLYDVLSIVRDKKFMTLDPVSQDALPPKQNPQTLQLISKKKSLAGAAQILLKGAERLTKSVTENQENKLQRDFNSELLRLRQHWKLRKVGDKILGDLSYRSAGSLFPHHGTFEVIKNTDLDLDKKIPEDYCPLDVQIPSDLEGSAYIKVSIQKQAPDIGDLGTVNLFKRPLPKSKPGSPHWQTKLEAAQNVLLCKEIFAQLSREAVQIKSQVPHIVVKNQIISQPFPSLQLSISLCHSSNDKKSQKFATEKQCPEDHLYVLEHNLHLLIREFHKQTLSSIMMPHPASAPFGHKRMRLSGPQAFDKNEINSLQSSEGLLEKIIKQAKHIFLRSRAAATIDSLASRIEDPQIQAHWSNINDVYESSVKVLITSQGYEQICKSIQLQLNIGVEQIRVVHRDGRVITLSYQEQELQDFLLSQMSQHQVHAVQQLAKVMGWQVLSFSNHVGLGPIESIGNASAITVASPSGDYAISVRNGPESGSKIMVQFPRNQCKDLPKSDVLQDNKWSHLRGPFKEVQWNKMEGRNFVYKMELLMSALSPCLL</sequence>
<accession>Q9NVC6</accession>
<accession>B3KN07</accession>
<accession>Q9HA81</accession>
<accession>Q9UNP7</accession>
<accession>Q9Y2W0</accession>
<accession>Q9Y660</accession>
<comment type="function">
    <text evidence="12">Component of the Mediator complex, a coactivator involved in the regulated transcription of nearly all RNA polymerase II-dependent genes. Mediator functions as a bridge to convey information from gene-specific regulatory proteins to the basal RNA polymerase II transcription machinery. Mediator is recruited to promoters by direct interactions with regulatory proteins and serves as a scaffold for the assembly of a functional preinitiation complex with RNA polymerase II and the general transcription factors.</text>
</comment>
<comment type="subunit">
    <text evidence="1 3 4 5 6 7 9 11 12">Interacts with GATA1 and PPARG (By similarity). Component of the Mediator complex, which is composed of MED1, MED4, MED6, MED7, MED8, MED9, MED10, MED11, MED12, MED13, MED13L, MED14, MED15, MED16, MED17, MED18, MED19, MED20, MED21, MED22, MED23, MED24, MED25, MED26, MED27, MED29, MED30, MED31, CCNC, CDK8 and CDC2L6/CDK11. The MED12, MED13, CCNC and CDK8 subunits form a distinct module termed the CDK8 module. Mediator containing the CDK8 module is less active than Mediator lacking this module in supporting transcriptional activation. Individual preparations of the Mediator complex lacking one or more distinct subunits have been variously termed ARC, CRSP, DRIP, PC2, SMCC and TRAP. Interacts with STAT2.</text>
</comment>
<comment type="interaction">
    <interactant intactId="EBI-394562">
        <id>Q9NVC6</id>
    </interactant>
    <interactant intactId="EBI-394640">
        <id>Q9BUE0</id>
        <label>MED18</label>
    </interactant>
    <organismsDiffer>false</organismsDiffer>
    <experiments>7</experiments>
</comment>
<comment type="interaction">
    <interactant intactId="EBI-394562">
        <id>Q9NVC6</id>
    </interactant>
    <interactant intactId="EBI-394687">
        <id>Q15528</id>
        <label>MED22</label>
    </interactant>
    <organismsDiffer>false</organismsDiffer>
    <experiments>7</experiments>
</comment>
<comment type="interaction">
    <interactant intactId="EBI-394562">
        <id>Q9NVC6</id>
    </interactant>
    <interactant intactId="EBI-394603">
        <id>Q6P2C8</id>
        <label>MED27</label>
    </interactant>
    <organismsDiffer>false</organismsDiffer>
    <experiments>7</experiments>
</comment>
<comment type="interaction">
    <interactant intactId="EBI-394562">
        <id>Q9NVC6</id>
    </interactant>
    <interactant intactId="EBI-514199">
        <id>Q9H204</id>
        <label>MED28</label>
    </interactant>
    <organismsDiffer>false</organismsDiffer>
    <experiments>6</experiments>
</comment>
<comment type="interaction">
    <interactant intactId="EBI-394562">
        <id>Q9NVC6</id>
    </interactant>
    <interactant intactId="EBI-394624">
        <id>O75586</id>
        <label>MED6</label>
    </interactant>
    <organismsDiffer>false</organismsDiffer>
    <experiments>5</experiments>
</comment>
<comment type="interaction">
    <interactant intactId="EBI-394562">
        <id>Q9NVC6</id>
    </interactant>
    <interactant intactId="EBI-6260909">
        <id>Q9D8C6</id>
        <label>Med11</label>
    </interactant>
    <organismsDiffer>true</organismsDiffer>
    <experiments>2</experiments>
</comment>
<comment type="interaction">
    <interactant intactId="EBI-394562">
        <id>Q9NVC6</id>
    </interactant>
    <interactant intactId="EBI-309220">
        <id>Q9CQI9</id>
        <label>Med30</label>
    </interactant>
    <organismsDiffer>true</organismsDiffer>
    <experiments>2</experiments>
</comment>
<comment type="interaction">
    <interactant intactId="EBI-394562">
        <id>Q9NVC6</id>
    </interactant>
    <interactant intactId="EBI-7990252">
        <id>Q9D7W5</id>
        <label>Med8</label>
    </interactant>
    <organismsDiffer>true</organismsDiffer>
    <experiments>2</experiments>
</comment>
<comment type="subcellular location">
    <subcellularLocation>
        <location evidence="15">Nucleus</location>
    </subcellularLocation>
</comment>
<comment type="alternative products">
    <event type="alternative splicing"/>
    <isoform>
        <id>Q9NVC6-1</id>
        <name>1</name>
        <sequence type="displayed"/>
    </isoform>
    <isoform>
        <id>Q9NVC6-2</id>
        <name>2</name>
        <sequence type="described" ref="VSP_028115 VSP_028116"/>
    </isoform>
</comment>
<comment type="tissue specificity">
    <text evidence="3">Ubiquitous.</text>
</comment>
<comment type="disease" evidence="13">
    <disease id="DI-02983">
        <name>Microcephaly, postnatal progressive, with seizures and brain atrophy</name>
        <acronym>MCPHSBA</acronym>
        <description>A disorder characterized by postnatal progressive microcephaly and severe developmental retardation associated with cerebral and cerebellar atrophy. Infants manifest swallowing difficulties leading to failure to thrive, jitteriness, poor visual fixation, truncal arching, seizures. There is no acquisition of developmental milestones and patients suffer from marked spasticity and profound retardation. Progressive microcephaly becomes evident few months after birth.</description>
        <dbReference type="MIM" id="613668"/>
    </disease>
    <text>The disease is caused by variants affecting the gene represented in this entry.</text>
</comment>
<comment type="miscellaneous">
    <molecule>Isoform 2</molecule>
    <text evidence="15">May be due to intron retention.</text>
</comment>
<comment type="similarity">
    <text evidence="15">Belongs to the Mediator complex subunit 17 family.</text>
</comment>
<comment type="sequence caution" evidence="15">
    <conflict type="frameshift">
        <sequence resource="EMBL-CDS" id="AAD30856"/>
    </conflict>
</comment>
<organism>
    <name type="scientific">Homo sapiens</name>
    <name type="common">Human</name>
    <dbReference type="NCBI Taxonomy" id="9606"/>
    <lineage>
        <taxon>Eukaryota</taxon>
        <taxon>Metazoa</taxon>
        <taxon>Chordata</taxon>
        <taxon>Craniata</taxon>
        <taxon>Vertebrata</taxon>
        <taxon>Euteleostomi</taxon>
        <taxon>Mammalia</taxon>
        <taxon>Eutheria</taxon>
        <taxon>Euarchontoglires</taxon>
        <taxon>Primates</taxon>
        <taxon>Haplorrhini</taxon>
        <taxon>Catarrhini</taxon>
        <taxon>Hominidae</taxon>
        <taxon>Homo</taxon>
    </lineage>
</organism>
<protein>
    <recommendedName>
        <fullName>Mediator of RNA polymerase II transcription subunit 17</fullName>
    </recommendedName>
    <alternativeName>
        <fullName>Activator-recruited cofactor 77 kDa component</fullName>
        <shortName>ARC77</shortName>
    </alternativeName>
    <alternativeName>
        <fullName>Cofactor required for Sp1 transcriptional activation subunit 6</fullName>
        <shortName>CRSP complex subunit 6</shortName>
    </alternativeName>
    <alternativeName>
        <fullName>Mediator complex subunit 17</fullName>
    </alternativeName>
    <alternativeName>
        <fullName>Thyroid hormone receptor-associated protein complex 80 kDa component</fullName>
        <shortName>Trap80</shortName>
    </alternativeName>
    <alternativeName>
        <fullName>Transcriptional coactivator CRSP77</fullName>
    </alternativeName>
    <alternativeName>
        <fullName>Vitamin D3 receptor-interacting protein complex 80 kDa component</fullName>
        <shortName>DRIP80</shortName>
    </alternativeName>
</protein>
<reference key="1">
    <citation type="journal article" date="1999" name="Mol. Cell">
        <title>Identity between TRAP and SMCC complexes indicates novel pathways for the function of nuclear receptors and diverse mammalian activators.</title>
        <authorList>
            <person name="Ito M."/>
            <person name="Yuan C.-X."/>
            <person name="Malik S."/>
            <person name="Gu W."/>
            <person name="Fondell J.D."/>
            <person name="Yamamura S."/>
            <person name="Fu Z.-Y."/>
            <person name="Zhang X."/>
            <person name="Qin J."/>
            <person name="Roeder R.G."/>
        </authorList>
    </citation>
    <scope>NUCLEOTIDE SEQUENCE [MRNA] (ISOFORM 1)</scope>
    <scope>PROTEIN SEQUENCE OF 306-319; 405-415 AND 592-602</scope>
    <scope>TISSUE SPECIFICITY</scope>
    <scope>IDENTIFICATION IN TRAP COMPLEX</scope>
    <scope>VARIANT ASP-69</scope>
    <source>
        <tissue>Cervix carcinoma</tissue>
    </source>
</reference>
<reference key="2">
    <citation type="journal article" date="1999" name="Nature">
        <title>Ligand-dependent transcription activation by nuclear receptors requires the DRIP complex.</title>
        <authorList>
            <person name="Rachez C."/>
            <person name="Lemon B.D."/>
            <person name="Suldan Z."/>
            <person name="Bromleigh V."/>
            <person name="Gamble M."/>
            <person name="Naeaer A.M."/>
            <person name="Erdjument-Bromage H."/>
            <person name="Tempst P."/>
            <person name="Freedman L.P."/>
        </authorList>
    </citation>
    <scope>NUCLEOTIDE SEQUENCE [MRNA] (ISOFORM 1)</scope>
    <scope>PROTEIN SEQUENCE OF 88-99 AND 607-619</scope>
    <scope>IDENTIFICATION IN ARC COMPLEX</scope>
    <scope>VARIANT ASP-69</scope>
    <source>
        <tissue>Cervix carcinoma</tissue>
    </source>
</reference>
<reference key="3">
    <citation type="journal article" date="2004" name="Nat. Genet.">
        <title>Complete sequencing and characterization of 21,243 full-length human cDNAs.</title>
        <authorList>
            <person name="Ota T."/>
            <person name="Suzuki Y."/>
            <person name="Nishikawa T."/>
            <person name="Otsuki T."/>
            <person name="Sugiyama T."/>
            <person name="Irie R."/>
            <person name="Wakamatsu A."/>
            <person name="Hayashi K."/>
            <person name="Sato H."/>
            <person name="Nagai K."/>
            <person name="Kimura K."/>
            <person name="Makita H."/>
            <person name="Sekine M."/>
            <person name="Obayashi M."/>
            <person name="Nishi T."/>
            <person name="Shibahara T."/>
            <person name="Tanaka T."/>
            <person name="Ishii S."/>
            <person name="Yamamoto J."/>
            <person name="Saito K."/>
            <person name="Kawai Y."/>
            <person name="Isono Y."/>
            <person name="Nakamura Y."/>
            <person name="Nagahari K."/>
            <person name="Murakami K."/>
            <person name="Yasuda T."/>
            <person name="Iwayanagi T."/>
            <person name="Wagatsuma M."/>
            <person name="Shiratori A."/>
            <person name="Sudo H."/>
            <person name="Hosoiri T."/>
            <person name="Kaku Y."/>
            <person name="Kodaira H."/>
            <person name="Kondo H."/>
            <person name="Sugawara M."/>
            <person name="Takahashi M."/>
            <person name="Kanda K."/>
            <person name="Yokoi T."/>
            <person name="Furuya T."/>
            <person name="Kikkawa E."/>
            <person name="Omura Y."/>
            <person name="Abe K."/>
            <person name="Kamihara K."/>
            <person name="Katsuta N."/>
            <person name="Sato K."/>
            <person name="Tanikawa M."/>
            <person name="Yamazaki M."/>
            <person name="Ninomiya K."/>
            <person name="Ishibashi T."/>
            <person name="Yamashita H."/>
            <person name="Murakawa K."/>
            <person name="Fujimori K."/>
            <person name="Tanai H."/>
            <person name="Kimata M."/>
            <person name="Watanabe M."/>
            <person name="Hiraoka S."/>
            <person name="Chiba Y."/>
            <person name="Ishida S."/>
            <person name="Ono Y."/>
            <person name="Takiguchi S."/>
            <person name="Watanabe S."/>
            <person name="Yosida M."/>
            <person name="Hotuta T."/>
            <person name="Kusano J."/>
            <person name="Kanehori K."/>
            <person name="Takahashi-Fujii A."/>
            <person name="Hara H."/>
            <person name="Tanase T.-O."/>
            <person name="Nomura Y."/>
            <person name="Togiya S."/>
            <person name="Komai F."/>
            <person name="Hara R."/>
            <person name="Takeuchi K."/>
            <person name="Arita M."/>
            <person name="Imose N."/>
            <person name="Musashino K."/>
            <person name="Yuuki H."/>
            <person name="Oshima A."/>
            <person name="Sasaki N."/>
            <person name="Aotsuka S."/>
            <person name="Yoshikawa Y."/>
            <person name="Matsunawa H."/>
            <person name="Ichihara T."/>
            <person name="Shiohata N."/>
            <person name="Sano S."/>
            <person name="Moriya S."/>
            <person name="Momiyama H."/>
            <person name="Satoh N."/>
            <person name="Takami S."/>
            <person name="Terashima Y."/>
            <person name="Suzuki O."/>
            <person name="Nakagawa S."/>
            <person name="Senoh A."/>
            <person name="Mizoguchi H."/>
            <person name="Goto Y."/>
            <person name="Shimizu F."/>
            <person name="Wakebe H."/>
            <person name="Hishigaki H."/>
            <person name="Watanabe T."/>
            <person name="Sugiyama A."/>
            <person name="Takemoto M."/>
            <person name="Kawakami B."/>
            <person name="Yamazaki M."/>
            <person name="Watanabe K."/>
            <person name="Kumagai A."/>
            <person name="Itakura S."/>
            <person name="Fukuzumi Y."/>
            <person name="Fujimori Y."/>
            <person name="Komiyama M."/>
            <person name="Tashiro H."/>
            <person name="Tanigami A."/>
            <person name="Fujiwara T."/>
            <person name="Ono T."/>
            <person name="Yamada K."/>
            <person name="Fujii Y."/>
            <person name="Ozaki K."/>
            <person name="Hirao M."/>
            <person name="Ohmori Y."/>
            <person name="Kawabata A."/>
            <person name="Hikiji T."/>
            <person name="Kobatake N."/>
            <person name="Inagaki H."/>
            <person name="Ikema Y."/>
            <person name="Okamoto S."/>
            <person name="Okitani R."/>
            <person name="Kawakami T."/>
            <person name="Noguchi S."/>
            <person name="Itoh T."/>
            <person name="Shigeta K."/>
            <person name="Senba T."/>
            <person name="Matsumura K."/>
            <person name="Nakajima Y."/>
            <person name="Mizuno T."/>
            <person name="Morinaga M."/>
            <person name="Sasaki M."/>
            <person name="Togashi T."/>
            <person name="Oyama M."/>
            <person name="Hata H."/>
            <person name="Watanabe M."/>
            <person name="Komatsu T."/>
            <person name="Mizushima-Sugano J."/>
            <person name="Satoh T."/>
            <person name="Shirai Y."/>
            <person name="Takahashi Y."/>
            <person name="Nakagawa K."/>
            <person name="Okumura K."/>
            <person name="Nagase T."/>
            <person name="Nomura N."/>
            <person name="Kikuchi H."/>
            <person name="Masuho Y."/>
            <person name="Yamashita R."/>
            <person name="Nakai K."/>
            <person name="Yada T."/>
            <person name="Nakamura Y."/>
            <person name="Ohara O."/>
            <person name="Isogai T."/>
            <person name="Sugano S."/>
        </authorList>
    </citation>
    <scope>NUCLEOTIDE SEQUENCE [LARGE SCALE MRNA] (ISOFORMS 1 AND 2)</scope>
    <scope>VARIANT ASP-69</scope>
    <source>
        <tissue>Embryo</tissue>
    </source>
</reference>
<reference key="4">
    <citation type="journal article" date="2006" name="Nature">
        <title>Human chromosome 11 DNA sequence and analysis including novel gene identification.</title>
        <authorList>
            <person name="Taylor T.D."/>
            <person name="Noguchi H."/>
            <person name="Totoki Y."/>
            <person name="Toyoda A."/>
            <person name="Kuroki Y."/>
            <person name="Dewar K."/>
            <person name="Lloyd C."/>
            <person name="Itoh T."/>
            <person name="Takeda T."/>
            <person name="Kim D.-W."/>
            <person name="She X."/>
            <person name="Barlow K.F."/>
            <person name="Bloom T."/>
            <person name="Bruford E."/>
            <person name="Chang J.L."/>
            <person name="Cuomo C.A."/>
            <person name="Eichler E."/>
            <person name="FitzGerald M.G."/>
            <person name="Jaffe D.B."/>
            <person name="LaButti K."/>
            <person name="Nicol R."/>
            <person name="Park H.-S."/>
            <person name="Seaman C."/>
            <person name="Sougnez C."/>
            <person name="Yang X."/>
            <person name="Zimmer A.R."/>
            <person name="Zody M.C."/>
            <person name="Birren B.W."/>
            <person name="Nusbaum C."/>
            <person name="Fujiyama A."/>
            <person name="Hattori M."/>
            <person name="Rogers J."/>
            <person name="Lander E.S."/>
            <person name="Sakaki Y."/>
        </authorList>
    </citation>
    <scope>NUCLEOTIDE SEQUENCE [LARGE SCALE GENOMIC DNA]</scope>
</reference>
<reference key="5">
    <citation type="journal article" date="2004" name="Genome Res.">
        <title>The status, quality, and expansion of the NIH full-length cDNA project: the Mammalian Gene Collection (MGC).</title>
        <authorList>
            <consortium name="The MGC Project Team"/>
        </authorList>
    </citation>
    <scope>NUCLEOTIDE SEQUENCE [LARGE SCALE MRNA] (ISOFORM 1)</scope>
    <scope>VARIANT ASP-69</scope>
    <source>
        <tissue>Skin</tissue>
    </source>
</reference>
<reference key="6">
    <citation type="journal article" date="1999" name="Nature">
        <title>The transcriptional cofactor complex CRSP is required for activity of the enhancer-binding protein Sp1.</title>
        <authorList>
            <person name="Ryu S."/>
            <person name="Zhou S."/>
            <person name="Ladurner A.G."/>
            <person name="Tjian R."/>
        </authorList>
    </citation>
    <scope>NUCLEOTIDE SEQUENCE [MRNA] OF 269-651 (ISOFORM 1)</scope>
</reference>
<reference key="7">
    <citation type="journal article" date="1999" name="Nature">
        <title>Composite co-activator ARC mediates chromatin-directed transcriptional activation.</title>
        <authorList>
            <person name="Naeaer A.M."/>
            <person name="Beaurang P.A."/>
            <person name="Zhou S."/>
            <person name="Abraham S."/>
            <person name="Solomon W.B."/>
            <person name="Tjian R."/>
        </authorList>
    </citation>
    <scope>IDENTIFICATION IN ARC COMPLEX</scope>
    <scope>PROTEIN SEQUENCE OF 168-179 AND 355-361</scope>
</reference>
<reference key="8">
    <citation type="journal article" date="2003" name="J. Biol. Chem.">
        <title>Identification of mammalian Mediator subunits with similarities to yeast Mediator subunits Srb5, Srb6, Med11, and Rox3.</title>
        <authorList>
            <person name="Sato S."/>
            <person name="Tomomori-Sato C."/>
            <person name="Banks C.A.S."/>
            <person name="Sorokina I."/>
            <person name="Parmely T.J."/>
            <person name="Kong S.E."/>
            <person name="Jin J."/>
            <person name="Cai Y."/>
            <person name="Lane W.S."/>
            <person name="Brower C.S."/>
            <person name="Conaway R.C."/>
            <person name="Conaway J.W."/>
        </authorList>
    </citation>
    <scope>INTERACTION WITH MED10</scope>
</reference>
<reference key="9">
    <citation type="journal article" date="2003" name="Mol. Cell. Biol.">
        <title>Role of metazoan mediator proteins in interferon-responsive transcription.</title>
        <authorList>
            <person name="Lau J.F."/>
            <person name="Nusinzon I."/>
            <person name="Burakov D."/>
            <person name="Freedman L.P."/>
            <person name="Horvath C.M."/>
        </authorList>
    </citation>
    <scope>INTERACTION WITH STAT2</scope>
</reference>
<reference key="10">
    <citation type="journal article" date="2004" name="Mol. Cell">
        <title>A set of consensus mammalian mediator subunits identified by multidimensional protein identification technology.</title>
        <authorList>
            <person name="Sato S."/>
            <person name="Tomomori-Sato C."/>
            <person name="Parmely T.J."/>
            <person name="Florens L."/>
            <person name="Zybailov B."/>
            <person name="Swanson S.K."/>
            <person name="Banks C.A.S."/>
            <person name="Jin J."/>
            <person name="Cai Y."/>
            <person name="Washburn M.P."/>
            <person name="Conaway J.W."/>
            <person name="Conaway R.C."/>
        </authorList>
    </citation>
    <scope>IDENTIFICATION BY MASS SPECTROMETRY</scope>
    <scope>IDENTIFICATION IN THE MEDIATOR COMPLEX</scope>
</reference>
<reference key="11">
    <citation type="journal article" date="2005" name="Mol. Cell">
        <title>MED1/TRAP220 exists predominantly in a TRAP/Mediator subpopulation enriched in RNA polymerase II and is required for ER-mediated transcription.</title>
        <authorList>
            <person name="Zhang X."/>
            <person name="Krutchinsky A."/>
            <person name="Fukuda A."/>
            <person name="Chen W."/>
            <person name="Yamamura S."/>
            <person name="Chait B.T."/>
            <person name="Roeder R.G."/>
        </authorList>
    </citation>
    <scope>INTERACTION WITH MED1; MED10; MED18; MED21; MED28 AND MED30</scope>
    <scope>IDENTIFICATION BY MASS SPECTROMETRY</scope>
    <scope>IDENTIFICATION IN THE MEDIATOR COMPLEX</scope>
    <scope>ASSOCIATION OF THE MEDIATOR COMPLEX WITH RNA POLYMERASE II</scope>
</reference>
<reference key="12">
    <citation type="journal article" date="2006" name="J. Biol. Chem.">
        <title>Human Mediator enhances basal transcription by facilitating recruitment of transcription factor IIB during preinitiation complex assembly.</title>
        <authorList>
            <person name="Baek H.J."/>
            <person name="Kang Y.K."/>
            <person name="Roeder R.G."/>
        </authorList>
    </citation>
    <scope>FUNCTION</scope>
    <scope>INTERACTION WITH MED1 AND MED10</scope>
</reference>
<reference key="13">
    <citation type="journal article" date="2007" name="Science">
        <title>ATM and ATR substrate analysis reveals extensive protein networks responsive to DNA damage.</title>
        <authorList>
            <person name="Matsuoka S."/>
            <person name="Ballif B.A."/>
            <person name="Smogorzewska A."/>
            <person name="McDonald E.R. III"/>
            <person name="Hurov K.E."/>
            <person name="Luo J."/>
            <person name="Bakalarski C.E."/>
            <person name="Zhao Z."/>
            <person name="Solimini N."/>
            <person name="Lerenthal Y."/>
            <person name="Shiloh Y."/>
            <person name="Gygi S.P."/>
            <person name="Elledge S.J."/>
        </authorList>
    </citation>
    <scope>IDENTIFICATION BY MASS SPECTROMETRY [LARGE SCALE ANALYSIS]</scope>
    <source>
        <tissue>Embryonic kidney</tissue>
    </source>
</reference>
<reference key="14">
    <citation type="journal article" date="2008" name="Mol. Cell">
        <title>Kinase-selective enrichment enables quantitative phosphoproteomics of the kinome across the cell cycle.</title>
        <authorList>
            <person name="Daub H."/>
            <person name="Olsen J.V."/>
            <person name="Bairlein M."/>
            <person name="Gnad F."/>
            <person name="Oppermann F.S."/>
            <person name="Korner R."/>
            <person name="Greff Z."/>
            <person name="Keri G."/>
            <person name="Stemmann O."/>
            <person name="Mann M."/>
        </authorList>
    </citation>
    <scope>VARIANT [LARGE SCALE ANALYSIS] ASP-69</scope>
    <scope>IDENTIFICATION BY MASS SPECTROMETRY [LARGE SCALE ANALYSIS]</scope>
    <source>
        <tissue>Cervix carcinoma</tissue>
    </source>
</reference>
<reference key="15">
    <citation type="journal article" date="2009" name="Mol. Cell. Proteomics">
        <title>Large-scale proteomics analysis of the human kinome.</title>
        <authorList>
            <person name="Oppermann F.S."/>
            <person name="Gnad F."/>
            <person name="Olsen J.V."/>
            <person name="Hornberger R."/>
            <person name="Greff Z."/>
            <person name="Keri G."/>
            <person name="Mann M."/>
            <person name="Daub H."/>
        </authorList>
    </citation>
    <scope>VARIANT [LARGE SCALE ANALYSIS] ASP-69</scope>
    <scope>IDENTIFICATION BY MASS SPECTROMETRY [LARGE SCALE ANALYSIS]</scope>
</reference>
<reference key="16">
    <citation type="journal article" date="2010" name="Am. J. Hum. Genet.">
        <title>Infantile cerebral and cerebellar atrophy is associated with a mutation in the MED17 subunit of the transcription preinitiation mediator complex.</title>
        <authorList>
            <person name="Kaufmann R."/>
            <person name="Straussberg R."/>
            <person name="Mandel H."/>
            <person name="Fattal-Valevski A."/>
            <person name="Ben-Zeev B."/>
            <person name="Naamati A."/>
            <person name="Shaag A."/>
            <person name="Zenvirt S."/>
            <person name="Konen O."/>
            <person name="Mimouni-Bloch A."/>
            <person name="Dobyns W.B."/>
            <person name="Edvardson S."/>
            <person name="Pines O."/>
            <person name="Elpeleg O."/>
        </authorList>
    </citation>
    <scope>VARIANT MCPHSBA PRO-371</scope>
</reference>
<dbReference type="EMBL" id="AF117657">
    <property type="protein sequence ID" value="AAD22031.2"/>
    <property type="molecule type" value="mRNA"/>
</dbReference>
<dbReference type="EMBL" id="AF105421">
    <property type="protein sequence ID" value="AAD30856.1"/>
    <property type="status" value="ALT_FRAME"/>
    <property type="molecule type" value="mRNA"/>
</dbReference>
<dbReference type="EMBL" id="AK001674">
    <property type="protein sequence ID" value="BAA91827.1"/>
    <property type="molecule type" value="mRNA"/>
</dbReference>
<dbReference type="EMBL" id="AK022156">
    <property type="protein sequence ID" value="BAB13973.1"/>
    <property type="molecule type" value="mRNA"/>
</dbReference>
<dbReference type="EMBL" id="AK023209">
    <property type="protein sequence ID" value="BAG51169.1"/>
    <property type="molecule type" value="mRNA"/>
</dbReference>
<dbReference type="EMBL" id="AC022150">
    <property type="status" value="NOT_ANNOTATED_CDS"/>
    <property type="molecule type" value="Genomic_DNA"/>
</dbReference>
<dbReference type="EMBL" id="BC021101">
    <property type="protein sequence ID" value="AAH21101.1"/>
    <property type="molecule type" value="mRNA"/>
</dbReference>
<dbReference type="EMBL" id="AF104254">
    <property type="protein sequence ID" value="AAD12723.1"/>
    <property type="molecule type" value="mRNA"/>
</dbReference>
<dbReference type="CCDS" id="CCDS8295.1">
    <molecule id="Q9NVC6-1"/>
</dbReference>
<dbReference type="RefSeq" id="NP_004259.3">
    <molecule id="Q9NVC6-1"/>
    <property type="nucleotide sequence ID" value="NM_004268.4"/>
</dbReference>
<dbReference type="PDB" id="7EMF">
    <property type="method" value="EM"/>
    <property type="resolution" value="3.50 A"/>
    <property type="chains" value="Q=1-651"/>
</dbReference>
<dbReference type="PDB" id="7ENA">
    <property type="method" value="EM"/>
    <property type="resolution" value="4.07 A"/>
    <property type="chains" value="q=1-651"/>
</dbReference>
<dbReference type="PDB" id="7ENC">
    <property type="method" value="EM"/>
    <property type="resolution" value="4.13 A"/>
    <property type="chains" value="q=1-651"/>
</dbReference>
<dbReference type="PDB" id="7ENJ">
    <property type="method" value="EM"/>
    <property type="resolution" value="4.40 A"/>
    <property type="chains" value="Q=1-651"/>
</dbReference>
<dbReference type="PDB" id="7LBM">
    <property type="method" value="EM"/>
    <property type="resolution" value="4.80 A"/>
    <property type="chains" value="j=1-651"/>
</dbReference>
<dbReference type="PDB" id="7NVR">
    <property type="method" value="EM"/>
    <property type="resolution" value="4.50 A"/>
    <property type="chains" value="d=1-651"/>
</dbReference>
<dbReference type="PDB" id="8GXQ">
    <property type="method" value="EM"/>
    <property type="resolution" value="5.04 A"/>
    <property type="chains" value="q=1-651"/>
</dbReference>
<dbReference type="PDB" id="8GXS">
    <property type="method" value="EM"/>
    <property type="resolution" value="4.16 A"/>
    <property type="chains" value="q=1-651"/>
</dbReference>
<dbReference type="PDB" id="8T9D">
    <property type="method" value="EM"/>
    <property type="resolution" value="4.66 A"/>
    <property type="chains" value="L=1-651"/>
</dbReference>
<dbReference type="PDB" id="8TQW">
    <property type="method" value="EM"/>
    <property type="resolution" value="8.20 A"/>
    <property type="chains" value="Q=1-651"/>
</dbReference>
<dbReference type="PDB" id="8TRH">
    <property type="method" value="EM"/>
    <property type="resolution" value="3.70 A"/>
    <property type="chains" value="Q=1-651"/>
</dbReference>
<dbReference type="PDBsum" id="7EMF"/>
<dbReference type="PDBsum" id="7ENA"/>
<dbReference type="PDBsum" id="7ENC"/>
<dbReference type="PDBsum" id="7ENJ"/>
<dbReference type="PDBsum" id="7LBM"/>
<dbReference type="PDBsum" id="7NVR"/>
<dbReference type="PDBsum" id="8GXQ"/>
<dbReference type="PDBsum" id="8GXS"/>
<dbReference type="PDBsum" id="8T9D"/>
<dbReference type="PDBsum" id="8TQW"/>
<dbReference type="PDBsum" id="8TRH"/>
<dbReference type="EMDB" id="EMD-12610"/>
<dbReference type="EMDB" id="EMD-23255"/>
<dbReference type="EMDB" id="EMD-31191"/>
<dbReference type="EMDB" id="EMD-31204"/>
<dbReference type="EMDB" id="EMD-31207"/>
<dbReference type="EMDB" id="EMD-31211"/>
<dbReference type="EMDB" id="EMD-34359"/>
<dbReference type="EMDB" id="EMD-34360"/>
<dbReference type="EMDB" id="EMD-41107"/>
<dbReference type="EMDB" id="EMD-41565"/>
<dbReference type="EMDB" id="EMD-41580"/>
<dbReference type="SMR" id="Q9NVC6"/>
<dbReference type="BioGRID" id="114830">
    <property type="interactions" value="222"/>
</dbReference>
<dbReference type="ComplexPortal" id="CPX-3227">
    <property type="entry name" value="Core mediator complex"/>
</dbReference>
<dbReference type="CORUM" id="Q9NVC6"/>
<dbReference type="DIP" id="DIP-31451N"/>
<dbReference type="FunCoup" id="Q9NVC6">
    <property type="interactions" value="4292"/>
</dbReference>
<dbReference type="IntAct" id="Q9NVC6">
    <property type="interactions" value="147"/>
</dbReference>
<dbReference type="MINT" id="Q9NVC6"/>
<dbReference type="STRING" id="9606.ENSP00000251871"/>
<dbReference type="GlyGen" id="Q9NVC6">
    <property type="glycosylation" value="1 site, 1 O-linked glycan (1 site)"/>
</dbReference>
<dbReference type="iPTMnet" id="Q9NVC6"/>
<dbReference type="PhosphoSitePlus" id="Q9NVC6"/>
<dbReference type="BioMuta" id="MED17"/>
<dbReference type="DMDM" id="296437366"/>
<dbReference type="jPOST" id="Q9NVC6"/>
<dbReference type="MassIVE" id="Q9NVC6"/>
<dbReference type="PaxDb" id="9606-ENSP00000251871"/>
<dbReference type="PeptideAtlas" id="Q9NVC6"/>
<dbReference type="ProteomicsDB" id="82777">
    <molecule id="Q9NVC6-1"/>
</dbReference>
<dbReference type="ProteomicsDB" id="82778">
    <molecule id="Q9NVC6-2"/>
</dbReference>
<dbReference type="Pumba" id="Q9NVC6"/>
<dbReference type="Antibodypedia" id="17843">
    <property type="antibodies" value="285 antibodies from 34 providers"/>
</dbReference>
<dbReference type="DNASU" id="9440"/>
<dbReference type="Ensembl" id="ENST00000251871.9">
    <molecule id="Q9NVC6-1"/>
    <property type="protein sequence ID" value="ENSP00000251871.3"/>
    <property type="gene ID" value="ENSG00000042429.12"/>
</dbReference>
<dbReference type="GeneID" id="9440"/>
<dbReference type="KEGG" id="hsa:9440"/>
<dbReference type="MANE-Select" id="ENST00000251871.9">
    <property type="protein sequence ID" value="ENSP00000251871.3"/>
    <property type="RefSeq nucleotide sequence ID" value="NM_004268.5"/>
    <property type="RefSeq protein sequence ID" value="NP_004259.3"/>
</dbReference>
<dbReference type="UCSC" id="uc001pel.3">
    <molecule id="Q9NVC6-1"/>
    <property type="organism name" value="human"/>
</dbReference>
<dbReference type="AGR" id="HGNC:2375"/>
<dbReference type="CTD" id="9440"/>
<dbReference type="DisGeNET" id="9440"/>
<dbReference type="GeneCards" id="MED17"/>
<dbReference type="HGNC" id="HGNC:2375">
    <property type="gene designation" value="MED17"/>
</dbReference>
<dbReference type="HPA" id="ENSG00000042429">
    <property type="expression patterns" value="Low tissue specificity"/>
</dbReference>
<dbReference type="MalaCards" id="MED17"/>
<dbReference type="MIM" id="603810">
    <property type="type" value="gene"/>
</dbReference>
<dbReference type="MIM" id="613668">
    <property type="type" value="phenotype"/>
</dbReference>
<dbReference type="neXtProt" id="NX_Q9NVC6"/>
<dbReference type="OpenTargets" id="ENSG00000042429"/>
<dbReference type="Orphanet" id="402364">
    <property type="disease" value="Infantile cerebral and cerebellar atrophy with postnatal progressive microcephaly"/>
</dbReference>
<dbReference type="PharmGKB" id="PA162395443"/>
<dbReference type="VEuPathDB" id="HostDB:ENSG00000042429"/>
<dbReference type="eggNOG" id="KOG4512">
    <property type="taxonomic scope" value="Eukaryota"/>
</dbReference>
<dbReference type="GeneTree" id="ENSGT00390000011810"/>
<dbReference type="HOGENOM" id="CLU_028003_1_0_1"/>
<dbReference type="InParanoid" id="Q9NVC6"/>
<dbReference type="OMA" id="HMSYEPQ"/>
<dbReference type="OrthoDB" id="10058398at2759"/>
<dbReference type="PAN-GO" id="Q9NVC6">
    <property type="GO annotations" value="4 GO annotations based on evolutionary models"/>
</dbReference>
<dbReference type="PhylomeDB" id="Q9NVC6"/>
<dbReference type="TreeFam" id="TF323615"/>
<dbReference type="PathwayCommons" id="Q9NVC6"/>
<dbReference type="Reactome" id="R-HSA-1989781">
    <property type="pathway name" value="PPARA activates gene expression"/>
</dbReference>
<dbReference type="Reactome" id="R-HSA-212436">
    <property type="pathway name" value="Generic Transcription Pathway"/>
</dbReference>
<dbReference type="Reactome" id="R-HSA-381340">
    <property type="pathway name" value="Transcriptional regulation of white adipocyte differentiation"/>
</dbReference>
<dbReference type="Reactome" id="R-HSA-9833110">
    <property type="pathway name" value="RSV-host interactions"/>
</dbReference>
<dbReference type="Reactome" id="R-HSA-9841922">
    <property type="pathway name" value="MLL4 and MLL3 complexes regulate expression of PPARG target genes in adipogenesis and hepatic steatosis"/>
</dbReference>
<dbReference type="SignaLink" id="Q9NVC6"/>
<dbReference type="SIGNOR" id="Q9NVC6"/>
<dbReference type="BioGRID-ORCS" id="9440">
    <property type="hits" value="754 hits in 1168 CRISPR screens"/>
</dbReference>
<dbReference type="ChiTaRS" id="MED17">
    <property type="organism name" value="human"/>
</dbReference>
<dbReference type="GeneWiki" id="MED17"/>
<dbReference type="GenomeRNAi" id="9440"/>
<dbReference type="Pharos" id="Q9NVC6">
    <property type="development level" value="Tbio"/>
</dbReference>
<dbReference type="PRO" id="PR:Q9NVC6"/>
<dbReference type="Proteomes" id="UP000005640">
    <property type="component" value="Chromosome 11"/>
</dbReference>
<dbReference type="RNAct" id="Q9NVC6">
    <property type="molecule type" value="protein"/>
</dbReference>
<dbReference type="Bgee" id="ENSG00000042429">
    <property type="expression patterns" value="Expressed in sural nerve and 128 other cell types or tissues"/>
</dbReference>
<dbReference type="ExpressionAtlas" id="Q9NVC6">
    <property type="expression patterns" value="baseline and differential"/>
</dbReference>
<dbReference type="GO" id="GO:0070847">
    <property type="term" value="C:core mediator complex"/>
    <property type="evidence" value="ECO:0000353"/>
    <property type="project" value="ComplexPortal"/>
</dbReference>
<dbReference type="GO" id="GO:0016592">
    <property type="term" value="C:mediator complex"/>
    <property type="evidence" value="ECO:0000314"/>
    <property type="project" value="UniProtKB"/>
</dbReference>
<dbReference type="GO" id="GO:0016020">
    <property type="term" value="C:membrane"/>
    <property type="evidence" value="ECO:0007005"/>
    <property type="project" value="UniProtKB"/>
</dbReference>
<dbReference type="GO" id="GO:0005654">
    <property type="term" value="C:nucleoplasm"/>
    <property type="evidence" value="ECO:0000304"/>
    <property type="project" value="Reactome"/>
</dbReference>
<dbReference type="GO" id="GO:0005634">
    <property type="term" value="C:nucleus"/>
    <property type="evidence" value="ECO:0000314"/>
    <property type="project" value="UniProtKB"/>
</dbReference>
<dbReference type="GO" id="GO:0005667">
    <property type="term" value="C:transcription regulator complex"/>
    <property type="evidence" value="ECO:0000314"/>
    <property type="project" value="MGI"/>
</dbReference>
<dbReference type="GO" id="GO:0000151">
    <property type="term" value="C:ubiquitin ligase complex"/>
    <property type="evidence" value="ECO:0007669"/>
    <property type="project" value="Ensembl"/>
</dbReference>
<dbReference type="GO" id="GO:0046966">
    <property type="term" value="F:nuclear thyroid hormone receptor binding"/>
    <property type="evidence" value="ECO:0000314"/>
    <property type="project" value="UniProtKB"/>
</dbReference>
<dbReference type="GO" id="GO:0042809">
    <property type="term" value="F:nuclear vitamin D receptor binding"/>
    <property type="evidence" value="ECO:0000303"/>
    <property type="project" value="UniProtKB"/>
</dbReference>
<dbReference type="GO" id="GO:0003713">
    <property type="term" value="F:transcription coactivator activity"/>
    <property type="evidence" value="ECO:0000314"/>
    <property type="project" value="UniProtKB"/>
</dbReference>
<dbReference type="GO" id="GO:0003712">
    <property type="term" value="F:transcription coregulator activity"/>
    <property type="evidence" value="ECO:0000314"/>
    <property type="project" value="UniProtKB"/>
</dbReference>
<dbReference type="GO" id="GO:0061630">
    <property type="term" value="F:ubiquitin protein ligase activity"/>
    <property type="evidence" value="ECO:0007669"/>
    <property type="project" value="Ensembl"/>
</dbReference>
<dbReference type="GO" id="GO:0045893">
    <property type="term" value="P:positive regulation of DNA-templated transcription"/>
    <property type="evidence" value="ECO:0000314"/>
    <property type="project" value="UniProtKB"/>
</dbReference>
<dbReference type="GO" id="GO:0045944">
    <property type="term" value="P:positive regulation of transcription by RNA polymerase II"/>
    <property type="evidence" value="ECO:0000314"/>
    <property type="project" value="MGI"/>
</dbReference>
<dbReference type="GO" id="GO:0032968">
    <property type="term" value="P:positive regulation of transcription elongation by RNA polymerase II"/>
    <property type="evidence" value="ECO:0000303"/>
    <property type="project" value="ComplexPortal"/>
</dbReference>
<dbReference type="GO" id="GO:0060261">
    <property type="term" value="P:positive regulation of transcription initiation by RNA polymerase II"/>
    <property type="evidence" value="ECO:0000314"/>
    <property type="project" value="UniProtKB"/>
</dbReference>
<dbReference type="GO" id="GO:0016567">
    <property type="term" value="P:protein ubiquitination"/>
    <property type="evidence" value="ECO:0007669"/>
    <property type="project" value="Ensembl"/>
</dbReference>
<dbReference type="GO" id="GO:0006357">
    <property type="term" value="P:regulation of transcription by RNA polymerase II"/>
    <property type="evidence" value="ECO:0000314"/>
    <property type="project" value="MGI"/>
</dbReference>
<dbReference type="GO" id="GO:0051123">
    <property type="term" value="P:RNA polymerase II preinitiation complex assembly"/>
    <property type="evidence" value="ECO:0000303"/>
    <property type="project" value="ComplexPortal"/>
</dbReference>
<dbReference type="GO" id="GO:0035019">
    <property type="term" value="P:somatic stem cell population maintenance"/>
    <property type="evidence" value="ECO:0007669"/>
    <property type="project" value="Ensembl"/>
</dbReference>
<dbReference type="GO" id="GO:0006367">
    <property type="term" value="P:transcription initiation at RNA polymerase II promoter"/>
    <property type="evidence" value="ECO:0000304"/>
    <property type="project" value="ProtInc"/>
</dbReference>
<dbReference type="InterPro" id="IPR019313">
    <property type="entry name" value="Mediator_Med17"/>
</dbReference>
<dbReference type="PANTHER" id="PTHR13114">
    <property type="entry name" value="MEDIATOR OF RNA POLYMERASE II TRANSCRIPTION SUBUNIT 17"/>
    <property type="match status" value="1"/>
</dbReference>
<dbReference type="PANTHER" id="PTHR13114:SF7">
    <property type="entry name" value="MEDIATOR OF RNA POLYMERASE II TRANSCRIPTION SUBUNIT 17"/>
    <property type="match status" value="1"/>
</dbReference>
<dbReference type="Pfam" id="PF10156">
    <property type="entry name" value="Med17"/>
    <property type="match status" value="1"/>
</dbReference>
<name>MED17_HUMAN</name>